<gene>
    <name type="primary">OTOA</name>
</gene>
<protein>
    <recommendedName>
        <fullName>Otoancorin</fullName>
    </recommendedName>
</protein>
<reference key="1">
    <citation type="journal article" date="2004" name="Nat. Genet.">
        <title>Complete sequencing and characterization of 21,243 full-length human cDNAs.</title>
        <authorList>
            <person name="Ota T."/>
            <person name="Suzuki Y."/>
            <person name="Nishikawa T."/>
            <person name="Otsuki T."/>
            <person name="Sugiyama T."/>
            <person name="Irie R."/>
            <person name="Wakamatsu A."/>
            <person name="Hayashi K."/>
            <person name="Sato H."/>
            <person name="Nagai K."/>
            <person name="Kimura K."/>
            <person name="Makita H."/>
            <person name="Sekine M."/>
            <person name="Obayashi M."/>
            <person name="Nishi T."/>
            <person name="Shibahara T."/>
            <person name="Tanaka T."/>
            <person name="Ishii S."/>
            <person name="Yamamoto J."/>
            <person name="Saito K."/>
            <person name="Kawai Y."/>
            <person name="Isono Y."/>
            <person name="Nakamura Y."/>
            <person name="Nagahari K."/>
            <person name="Murakami K."/>
            <person name="Yasuda T."/>
            <person name="Iwayanagi T."/>
            <person name="Wagatsuma M."/>
            <person name="Shiratori A."/>
            <person name="Sudo H."/>
            <person name="Hosoiri T."/>
            <person name="Kaku Y."/>
            <person name="Kodaira H."/>
            <person name="Kondo H."/>
            <person name="Sugawara M."/>
            <person name="Takahashi M."/>
            <person name="Kanda K."/>
            <person name="Yokoi T."/>
            <person name="Furuya T."/>
            <person name="Kikkawa E."/>
            <person name="Omura Y."/>
            <person name="Abe K."/>
            <person name="Kamihara K."/>
            <person name="Katsuta N."/>
            <person name="Sato K."/>
            <person name="Tanikawa M."/>
            <person name="Yamazaki M."/>
            <person name="Ninomiya K."/>
            <person name="Ishibashi T."/>
            <person name="Yamashita H."/>
            <person name="Murakawa K."/>
            <person name="Fujimori K."/>
            <person name="Tanai H."/>
            <person name="Kimata M."/>
            <person name="Watanabe M."/>
            <person name="Hiraoka S."/>
            <person name="Chiba Y."/>
            <person name="Ishida S."/>
            <person name="Ono Y."/>
            <person name="Takiguchi S."/>
            <person name="Watanabe S."/>
            <person name="Yosida M."/>
            <person name="Hotuta T."/>
            <person name="Kusano J."/>
            <person name="Kanehori K."/>
            <person name="Takahashi-Fujii A."/>
            <person name="Hara H."/>
            <person name="Tanase T.-O."/>
            <person name="Nomura Y."/>
            <person name="Togiya S."/>
            <person name="Komai F."/>
            <person name="Hara R."/>
            <person name="Takeuchi K."/>
            <person name="Arita M."/>
            <person name="Imose N."/>
            <person name="Musashino K."/>
            <person name="Yuuki H."/>
            <person name="Oshima A."/>
            <person name="Sasaki N."/>
            <person name="Aotsuka S."/>
            <person name="Yoshikawa Y."/>
            <person name="Matsunawa H."/>
            <person name="Ichihara T."/>
            <person name="Shiohata N."/>
            <person name="Sano S."/>
            <person name="Moriya S."/>
            <person name="Momiyama H."/>
            <person name="Satoh N."/>
            <person name="Takami S."/>
            <person name="Terashima Y."/>
            <person name="Suzuki O."/>
            <person name="Nakagawa S."/>
            <person name="Senoh A."/>
            <person name="Mizoguchi H."/>
            <person name="Goto Y."/>
            <person name="Shimizu F."/>
            <person name="Wakebe H."/>
            <person name="Hishigaki H."/>
            <person name="Watanabe T."/>
            <person name="Sugiyama A."/>
            <person name="Takemoto M."/>
            <person name="Kawakami B."/>
            <person name="Yamazaki M."/>
            <person name="Watanabe K."/>
            <person name="Kumagai A."/>
            <person name="Itakura S."/>
            <person name="Fukuzumi Y."/>
            <person name="Fujimori Y."/>
            <person name="Komiyama M."/>
            <person name="Tashiro H."/>
            <person name="Tanigami A."/>
            <person name="Fujiwara T."/>
            <person name="Ono T."/>
            <person name="Yamada K."/>
            <person name="Fujii Y."/>
            <person name="Ozaki K."/>
            <person name="Hirao M."/>
            <person name="Ohmori Y."/>
            <person name="Kawabata A."/>
            <person name="Hikiji T."/>
            <person name="Kobatake N."/>
            <person name="Inagaki H."/>
            <person name="Ikema Y."/>
            <person name="Okamoto S."/>
            <person name="Okitani R."/>
            <person name="Kawakami T."/>
            <person name="Noguchi S."/>
            <person name="Itoh T."/>
            <person name="Shigeta K."/>
            <person name="Senba T."/>
            <person name="Matsumura K."/>
            <person name="Nakajima Y."/>
            <person name="Mizuno T."/>
            <person name="Morinaga M."/>
            <person name="Sasaki M."/>
            <person name="Togashi T."/>
            <person name="Oyama M."/>
            <person name="Hata H."/>
            <person name="Watanabe M."/>
            <person name="Komatsu T."/>
            <person name="Mizushima-Sugano J."/>
            <person name="Satoh T."/>
            <person name="Shirai Y."/>
            <person name="Takahashi Y."/>
            <person name="Nakagawa K."/>
            <person name="Okumura K."/>
            <person name="Nagase T."/>
            <person name="Nomura N."/>
            <person name="Kikuchi H."/>
            <person name="Masuho Y."/>
            <person name="Yamashita R."/>
            <person name="Nakai K."/>
            <person name="Yada T."/>
            <person name="Nakamura Y."/>
            <person name="Ohara O."/>
            <person name="Isogai T."/>
            <person name="Sugano S."/>
        </authorList>
    </citation>
    <scope>NUCLEOTIDE SEQUENCE [LARGE SCALE MRNA] (ISOFORMS 2; 3 AND 4)</scope>
    <source>
        <tissue>Testis</tissue>
    </source>
</reference>
<reference key="2">
    <citation type="journal article" date="2004" name="Nature">
        <title>The sequence and analysis of duplication-rich human chromosome 16.</title>
        <authorList>
            <person name="Martin J."/>
            <person name="Han C."/>
            <person name="Gordon L.A."/>
            <person name="Terry A."/>
            <person name="Prabhakar S."/>
            <person name="She X."/>
            <person name="Xie G."/>
            <person name="Hellsten U."/>
            <person name="Chan Y.M."/>
            <person name="Altherr M."/>
            <person name="Couronne O."/>
            <person name="Aerts A."/>
            <person name="Bajorek E."/>
            <person name="Black S."/>
            <person name="Blumer H."/>
            <person name="Branscomb E."/>
            <person name="Brown N.C."/>
            <person name="Bruno W.J."/>
            <person name="Buckingham J.M."/>
            <person name="Callen D.F."/>
            <person name="Campbell C.S."/>
            <person name="Campbell M.L."/>
            <person name="Campbell E.W."/>
            <person name="Caoile C."/>
            <person name="Challacombe J.F."/>
            <person name="Chasteen L.A."/>
            <person name="Chertkov O."/>
            <person name="Chi H.C."/>
            <person name="Christensen M."/>
            <person name="Clark L.M."/>
            <person name="Cohn J.D."/>
            <person name="Denys M."/>
            <person name="Detter J.C."/>
            <person name="Dickson M."/>
            <person name="Dimitrijevic-Bussod M."/>
            <person name="Escobar J."/>
            <person name="Fawcett J.J."/>
            <person name="Flowers D."/>
            <person name="Fotopulos D."/>
            <person name="Glavina T."/>
            <person name="Gomez M."/>
            <person name="Gonzales E."/>
            <person name="Goodstein D."/>
            <person name="Goodwin L.A."/>
            <person name="Grady D.L."/>
            <person name="Grigoriev I."/>
            <person name="Groza M."/>
            <person name="Hammon N."/>
            <person name="Hawkins T."/>
            <person name="Haydu L."/>
            <person name="Hildebrand C.E."/>
            <person name="Huang W."/>
            <person name="Israni S."/>
            <person name="Jett J."/>
            <person name="Jewett P.B."/>
            <person name="Kadner K."/>
            <person name="Kimball H."/>
            <person name="Kobayashi A."/>
            <person name="Krawczyk M.-C."/>
            <person name="Leyba T."/>
            <person name="Longmire J.L."/>
            <person name="Lopez F."/>
            <person name="Lou Y."/>
            <person name="Lowry S."/>
            <person name="Ludeman T."/>
            <person name="Manohar C.F."/>
            <person name="Mark G.A."/>
            <person name="McMurray K.L."/>
            <person name="Meincke L.J."/>
            <person name="Morgan J."/>
            <person name="Moyzis R.K."/>
            <person name="Mundt M.O."/>
            <person name="Munk A.C."/>
            <person name="Nandkeshwar R.D."/>
            <person name="Pitluck S."/>
            <person name="Pollard M."/>
            <person name="Predki P."/>
            <person name="Parson-Quintana B."/>
            <person name="Ramirez L."/>
            <person name="Rash S."/>
            <person name="Retterer J."/>
            <person name="Ricke D.O."/>
            <person name="Robinson D.L."/>
            <person name="Rodriguez A."/>
            <person name="Salamov A."/>
            <person name="Saunders E.H."/>
            <person name="Scott D."/>
            <person name="Shough T."/>
            <person name="Stallings R.L."/>
            <person name="Stalvey M."/>
            <person name="Sutherland R.D."/>
            <person name="Tapia R."/>
            <person name="Tesmer J.G."/>
            <person name="Thayer N."/>
            <person name="Thompson L.S."/>
            <person name="Tice H."/>
            <person name="Torney D.C."/>
            <person name="Tran-Gyamfi M."/>
            <person name="Tsai M."/>
            <person name="Ulanovsky L.E."/>
            <person name="Ustaszewska A."/>
            <person name="Vo N."/>
            <person name="White P.S."/>
            <person name="Williams A.L."/>
            <person name="Wills P.L."/>
            <person name="Wu J.-R."/>
            <person name="Wu K."/>
            <person name="Yang J."/>
            <person name="DeJong P."/>
            <person name="Bruce D."/>
            <person name="Doggett N.A."/>
            <person name="Deaven L."/>
            <person name="Schmutz J."/>
            <person name="Grimwood J."/>
            <person name="Richardson P."/>
            <person name="Rokhsar D.S."/>
            <person name="Eichler E.E."/>
            <person name="Gilna P."/>
            <person name="Lucas S.M."/>
            <person name="Myers R.M."/>
            <person name="Rubin E.M."/>
            <person name="Pennacchio L.A."/>
        </authorList>
    </citation>
    <scope>NUCLEOTIDE SEQUENCE [LARGE SCALE GENOMIC DNA]</scope>
</reference>
<reference key="3">
    <citation type="journal article" date="2004" name="Genome Res.">
        <title>The status, quality, and expansion of the NIH full-length cDNA project: the Mammalian Gene Collection (MGC).</title>
        <authorList>
            <consortium name="The MGC Project Team"/>
        </authorList>
    </citation>
    <scope>NUCLEOTIDE SEQUENCE [LARGE SCALE MRNA] (ISOFORM 5)</scope>
</reference>
<reference key="4">
    <citation type="journal article" date="2002" name="Proc. Natl. Acad. Sci. U.S.A.">
        <title>Otoancorin, an inner ear protein restricted to the interface between the apical surface of sensory epithelia and their overlying acellular gels, is defective in autosomal recessive deafness DFNB22.</title>
        <authorList>
            <person name="Zwaenepoel I."/>
            <person name="Mustapha M."/>
            <person name="Leibovici M."/>
            <person name="Verpy E."/>
            <person name="Goodyear R."/>
            <person name="Liu X.Z."/>
            <person name="Nouaille S."/>
            <person name="Nance W.E."/>
            <person name="Kanaan M."/>
            <person name="Avraham K.B."/>
            <person name="Tekaia F."/>
            <person name="Loiselet J."/>
            <person name="Lathrop M."/>
            <person name="Richardson G."/>
            <person name="Petit C."/>
        </authorList>
    </citation>
    <scope>IDENTIFICATION (ISOFORM 1)</scope>
    <scope>INVOLVEMENT IN DFNB22</scope>
</reference>
<reference key="5">
    <citation type="journal article" date="2009" name="Mol. Cell. Proteomics">
        <title>A strategy for precise and large scale identification of core fucosylated glycoproteins.</title>
        <authorList>
            <person name="Jia W."/>
            <person name="Lu Z."/>
            <person name="Fu Y."/>
            <person name="Wang H.P."/>
            <person name="Wang L.H."/>
            <person name="Chi H."/>
            <person name="Yuan Z.F."/>
            <person name="Zheng Z.B."/>
            <person name="Song L.N."/>
            <person name="Han H.H."/>
            <person name="Liang Y.M."/>
            <person name="Wang J.L."/>
            <person name="Cai Y."/>
            <person name="Zhang Y.K."/>
            <person name="Deng Y.L."/>
            <person name="Ying W.T."/>
            <person name="He S.M."/>
            <person name="Qian X.H."/>
        </authorList>
    </citation>
    <scope>GLYCOSYLATION AT ASN-211</scope>
</reference>
<evidence type="ECO:0000250" key="1"/>
<evidence type="ECO:0000255" key="2"/>
<evidence type="ECO:0000256" key="3">
    <source>
        <dbReference type="SAM" id="MobiDB-lite"/>
    </source>
</evidence>
<evidence type="ECO:0000269" key="4">
    <source>
    </source>
</evidence>
<evidence type="ECO:0000269" key="5">
    <source>
    </source>
</evidence>
<evidence type="ECO:0000303" key="6">
    <source>
    </source>
</evidence>
<evidence type="ECO:0000303" key="7">
    <source>
    </source>
</evidence>
<evidence type="ECO:0000305" key="8"/>
<comment type="function">
    <text>May act as an adhesion molecule.</text>
</comment>
<comment type="subcellular location">
    <subcellularLocation>
        <location evidence="8">Apical cell membrane</location>
        <topology evidence="8">Lipid-anchor</topology>
        <topology evidence="8">GPI-anchor</topology>
        <orientation evidence="8">Extracellular side</orientation>
    </subcellularLocation>
    <subcellularLocation>
        <location evidence="8">Secreted</location>
        <location evidence="8">Extracellular space</location>
        <location evidence="8">Extracellular matrix</location>
    </subcellularLocation>
    <text evidence="1">At the interface between the apical surface of the epithelia and the overlying acellular gel of the tectorial and otoconial membranes.</text>
</comment>
<comment type="alternative products">
    <event type="alternative splicing"/>
    <isoform>
        <id>Q7RTW8-1</id>
        <name>1</name>
        <sequence type="displayed"/>
    </isoform>
    <isoform>
        <id>Q7RTW8-2</id>
        <name>2</name>
        <sequence type="described" ref="VSP_012212 VSP_012213"/>
    </isoform>
    <isoform>
        <id>Q7RTW8-3</id>
        <name>3</name>
        <sequence type="described" ref="VSP_012211 VSP_012214"/>
    </isoform>
    <isoform>
        <id>Q7RTW8-4</id>
        <name>4</name>
        <sequence type="described" ref="VSP_043345 VSP_043346 VSP_043347"/>
    </isoform>
    <isoform>
        <id>Q7RTW8-5</id>
        <name>5</name>
        <sequence type="described" ref="VSP_043347"/>
    </isoform>
</comment>
<comment type="disease" evidence="4">
    <disease id="DI-00866">
        <name>Deafness, autosomal recessive, 22</name>
        <acronym>DFNB22</acronym>
        <description>A form of non-syndromic sensorineural hearing loss. Sensorineural deafness results from damage to the neural receptors of the inner ear, the nerve pathways to the brain, or the area of the brain that receives sound information.</description>
        <dbReference type="MIM" id="607039"/>
    </disease>
    <text>The disease is caused by variants affecting the gene represented in this entry.</text>
</comment>
<comment type="similarity">
    <text evidence="8">Belongs to the stereocilin family.</text>
</comment>
<comment type="sequence caution" evidence="8">
    <conflict type="frameshift">
        <sequence resource="EMBL" id="AK057335"/>
    </conflict>
</comment>
<proteinExistence type="evidence at protein level"/>
<sequence>MSQEPTTYSLFLFLFLSHGVSSYTVPNSRQDLHPLLQNMAEEIIDGSYLNALLDLIQFQSSHVWTDDLSHRVLAYLNSRNVAFTIPSLQAAVENHLEQRLHQPQKLLEDLRKTDAQQFRTAMKCLLEDKKDGLDLKDIIIDLGEIRERALQSPGVNRSLFLITLERCFQMLNSLECVEILGKVLRGSSGSFLQPDITERLPRDLREDAFKNLSAVFKDLYDKTSAHSQRALYSWMTGILQTSSNATDDSASWVSAEHLWVLGRYMVHLSFEEITKISPIEIGLFISYDNATKQLDMVYDITPELAQAFLERISSSNFNMRNTSTIHRQAHELWALEPFPKMLGLLVCFYNDLELLDATVAQVLLYQMIKCSHLRGFQAGVQKLKAELLDIAMENQTLNETLGSLSDAVVGLTYSQLESLSPEAVHGAISTLNQVSGWAKSQVIILSAKYLAHEKVLSFYNVSQMGALLAGVSTQAFCSMKRKDISQVLRSAVSQYVSDLSPAQQQGILSKMVQAEDTAPGIVEIQGAFFKEVSLFDLRRQPGFNSTVLKDKELGRSQALFLYELLLKTTRRPEELLSAGQLVKGVTCSHIDAMSTDFFLAHFQDFQNNFALLSPYQVNCLAWKYWEVSRLSMPPFLLAALPARYLASVPASQCVPFLISLGKSWLDSLVLDSHKKTSVLRKVQQCLDDSIADEYTVDIMGNLLCHLPAAIIDRGISPRAWATALHGLRDCPDLNPEQKAAVRLKLLGQYGLPQHWTAETTKDLGPFLVLFSGDELSSIATKFPEILLQAASKMARTLPTKEFLWAVFQSVRNSSDKIPSYDPMPGCHGVVAPSSDDIFKLAEANACWALEDLRCMEEDTFIRTVELLGAVQGFSRPQLMTLKEKAIQVWDMPSYWREHHIVSLGRIALALNESELEQLDLSSIDTVASLSWQTEWTPGQAESILQGYLDDSGYSIQDLKSFHLVGLGATLCAINITEIPLIKISEFRVVVARIGTLLCSTHVLAEFKRKAEVVFGDPTEWTSSVLQELGTIAAGLTKAELRMLDKDLMPYFQPSAIKCLPDEIFKELSAEQIASLGPENAAAVTHAQRRRLSPLQLQSLQQALDGAKTHSWQDAPASAGPTRTSSSRSPAGALQSWGLWLGCPLLVLMAKLLW</sequence>
<accession>Q7RTW8</accession>
<accession>A1L3A8</accession>
<accession>A2VDI0</accession>
<accession>B3KWU3</accession>
<accession>E9PF51</accession>
<accession>Q8NA86</accession>
<accession>Q96M76</accession>
<keyword id="KW-0025">Alternative splicing</keyword>
<keyword id="KW-1003">Cell membrane</keyword>
<keyword id="KW-0209">Deafness</keyword>
<keyword id="KW-0272">Extracellular matrix</keyword>
<keyword id="KW-0325">Glycoprotein</keyword>
<keyword id="KW-0336">GPI-anchor</keyword>
<keyword id="KW-1009">Hearing</keyword>
<keyword id="KW-0449">Lipoprotein</keyword>
<keyword id="KW-0472">Membrane</keyword>
<keyword id="KW-1010">Non-syndromic deafness</keyword>
<keyword id="KW-1267">Proteomics identification</keyword>
<keyword id="KW-1185">Reference proteome</keyword>
<keyword id="KW-0964">Secreted</keyword>
<keyword id="KW-0732">Signal</keyword>
<name>OTOAN_HUMAN</name>
<organism>
    <name type="scientific">Homo sapiens</name>
    <name type="common">Human</name>
    <dbReference type="NCBI Taxonomy" id="9606"/>
    <lineage>
        <taxon>Eukaryota</taxon>
        <taxon>Metazoa</taxon>
        <taxon>Chordata</taxon>
        <taxon>Craniata</taxon>
        <taxon>Vertebrata</taxon>
        <taxon>Euteleostomi</taxon>
        <taxon>Mammalia</taxon>
        <taxon>Eutheria</taxon>
        <taxon>Euarchontoglires</taxon>
        <taxon>Primates</taxon>
        <taxon>Haplorrhini</taxon>
        <taxon>Catarrhini</taxon>
        <taxon>Hominidae</taxon>
        <taxon>Homo</taxon>
    </lineage>
</organism>
<feature type="signal peptide" evidence="2">
    <location>
        <begin position="1"/>
        <end position="22"/>
    </location>
</feature>
<feature type="chain" id="PRO_0000021971" description="Otoancorin">
    <location>
        <begin position="23"/>
        <end position="1130"/>
    </location>
</feature>
<feature type="propeptide" id="PRO_0000021972" description="Removed in mature form" evidence="2">
    <location>
        <begin position="1131"/>
        <end position="1153"/>
    </location>
</feature>
<feature type="region of interest" description="Disordered" evidence="3">
    <location>
        <begin position="1109"/>
        <end position="1128"/>
    </location>
</feature>
<feature type="lipid moiety-binding region" description="GPI-anchor amidated alanine" evidence="2">
    <location>
        <position position="1130"/>
    </location>
</feature>
<feature type="glycosylation site" description="N-linked (GlcNAc...) asparagine" evidence="2">
    <location>
        <position position="156"/>
    </location>
</feature>
<feature type="glycosylation site" description="N-linked (GlcNAc...) (complex) asparagine" evidence="5">
    <location>
        <position position="211"/>
    </location>
</feature>
<feature type="glycosylation site" description="N-linked (GlcNAc...) asparagine" evidence="2">
    <location>
        <position position="244"/>
    </location>
</feature>
<feature type="glycosylation site" description="N-linked (GlcNAc...) asparagine" evidence="2">
    <location>
        <position position="289"/>
    </location>
</feature>
<feature type="glycosylation site" description="N-linked (GlcNAc...) asparagine" evidence="2">
    <location>
        <position position="321"/>
    </location>
</feature>
<feature type="glycosylation site" description="N-linked (GlcNAc...) asparagine" evidence="2">
    <location>
        <position position="394"/>
    </location>
</feature>
<feature type="glycosylation site" description="N-linked (GlcNAc...) asparagine" evidence="2">
    <location>
        <position position="398"/>
    </location>
</feature>
<feature type="glycosylation site" description="N-linked (GlcNAc...) asparagine" evidence="2">
    <location>
        <position position="460"/>
    </location>
</feature>
<feature type="glycosylation site" description="N-linked (GlcNAc...) asparagine" evidence="2">
    <location>
        <position position="544"/>
    </location>
</feature>
<feature type="glycosylation site" description="N-linked (GlcNAc...) asparagine" evidence="2">
    <location>
        <position position="812"/>
    </location>
</feature>
<feature type="glycosylation site" description="N-linked (GlcNAc...) asparagine" evidence="2">
    <location>
        <position position="911"/>
    </location>
</feature>
<feature type="glycosylation site" description="N-linked (GlcNAc...) asparagine" evidence="2">
    <location>
        <position position="974"/>
    </location>
</feature>
<feature type="splice variant" id="VSP_012211" description="In isoform 3." evidence="6">
    <location>
        <begin position="1"/>
        <end position="728"/>
    </location>
</feature>
<feature type="splice variant" id="VSP_012212" description="In isoform 2." evidence="6">
    <location>
        <begin position="1"/>
        <end position="338"/>
    </location>
</feature>
<feature type="splice variant" id="VSP_043345" description="In isoform 4." evidence="6">
    <original>MSQEPTTYS</original>
    <variation>MGNSITYRD</variation>
    <location>
        <begin position="1"/>
        <end position="9"/>
    </location>
</feature>
<feature type="splice variant" id="VSP_043346" description="In isoform 4." evidence="6">
    <location>
        <begin position="10"/>
        <end position="88"/>
    </location>
</feature>
<feature type="splice variant" id="VSP_043347" description="In isoform 4 and isoform 5." evidence="6 7">
    <location>
        <begin position="328"/>
        <end position="341"/>
    </location>
</feature>
<feature type="splice variant" id="VSP_012213" description="In isoform 2." evidence="6">
    <original>PKM</original>
    <variation>MFR</variation>
    <location>
        <begin position="339"/>
        <end position="341"/>
    </location>
</feature>
<feature type="splice variant" id="VSP_012214" description="In isoform 3." evidence="6">
    <original>DCPDLNPEQKAAVRLKLLGQYG</original>
    <variation>MNVCKDSPRNKVNQKSKVMEKK</variation>
    <location>
        <begin position="729"/>
        <end position="750"/>
    </location>
</feature>
<feature type="sequence conflict" description="In Ref. 3; AAI29994." evidence="8" ref="3">
    <original>E</original>
    <variation>A</variation>
    <location>
        <position position="1039"/>
    </location>
</feature>
<dbReference type="EMBL" id="AK057335">
    <property type="status" value="NOT_ANNOTATED_CDS"/>
    <property type="molecule type" value="mRNA"/>
</dbReference>
<dbReference type="EMBL" id="AK093062">
    <property type="protein sequence ID" value="BAC04040.1"/>
    <property type="molecule type" value="mRNA"/>
</dbReference>
<dbReference type="EMBL" id="AK125840">
    <property type="protein sequence ID" value="BAG54255.1"/>
    <property type="molecule type" value="mRNA"/>
</dbReference>
<dbReference type="EMBL" id="AC092719">
    <property type="status" value="NOT_ANNOTATED_CDS"/>
    <property type="molecule type" value="Genomic_DNA"/>
</dbReference>
<dbReference type="EMBL" id="BC129992">
    <property type="protein sequence ID" value="AAI29993.1"/>
    <property type="molecule type" value="mRNA"/>
</dbReference>
<dbReference type="EMBL" id="BC129993">
    <property type="protein sequence ID" value="AAI29994.1"/>
    <property type="molecule type" value="mRNA"/>
</dbReference>
<dbReference type="EMBL" id="BK000099">
    <property type="protein sequence ID" value="DAA00022.1"/>
    <property type="molecule type" value="Genomic_DNA"/>
</dbReference>
<dbReference type="CCDS" id="CCDS10600.2">
    <molecule id="Q7RTW8-5"/>
</dbReference>
<dbReference type="CCDS" id="CCDS32403.1">
    <molecule id="Q7RTW8-2"/>
</dbReference>
<dbReference type="CCDS" id="CCDS53994.1">
    <molecule id="Q7RTW8-4"/>
</dbReference>
<dbReference type="RefSeq" id="NP_001155155.1">
    <molecule id="Q7RTW8-4"/>
    <property type="nucleotide sequence ID" value="NM_001161683.2"/>
</dbReference>
<dbReference type="RefSeq" id="NP_733764.1">
    <molecule id="Q7RTW8-2"/>
    <property type="nucleotide sequence ID" value="NM_170664.3"/>
</dbReference>
<dbReference type="RefSeq" id="XP_011544049.1">
    <property type="nucleotide sequence ID" value="XM_011545747.2"/>
</dbReference>
<dbReference type="BioGRID" id="126968">
    <property type="interactions" value="18"/>
</dbReference>
<dbReference type="FunCoup" id="Q7RTW8">
    <property type="interactions" value="23"/>
</dbReference>
<dbReference type="IntAct" id="Q7RTW8">
    <property type="interactions" value="9"/>
</dbReference>
<dbReference type="STRING" id="9606.ENSP00000496564"/>
<dbReference type="GlyCosmos" id="Q7RTW8">
    <property type="glycosylation" value="12 sites, No reported glycans"/>
</dbReference>
<dbReference type="GlyGen" id="Q7RTW8">
    <property type="glycosylation" value="12 sites"/>
</dbReference>
<dbReference type="iPTMnet" id="Q7RTW8"/>
<dbReference type="PhosphoSitePlus" id="Q7RTW8"/>
<dbReference type="BioMuta" id="OTOA"/>
<dbReference type="DMDM" id="56404568"/>
<dbReference type="jPOST" id="Q7RTW8"/>
<dbReference type="MassIVE" id="Q7RTW8"/>
<dbReference type="PaxDb" id="9606-ENSP00000373610"/>
<dbReference type="PeptideAtlas" id="Q7RTW8"/>
<dbReference type="Antibodypedia" id="50672">
    <property type="antibodies" value="79 antibodies from 19 providers"/>
</dbReference>
<dbReference type="DNASU" id="146183"/>
<dbReference type="Ensembl" id="ENST00000286149.8">
    <molecule id="Q7RTW8-1"/>
    <property type="protein sequence ID" value="ENSP00000286149.4"/>
    <property type="gene ID" value="ENSG00000155719.18"/>
</dbReference>
<dbReference type="Ensembl" id="ENST00000388956.8">
    <molecule id="Q7RTW8-4"/>
    <property type="protein sequence ID" value="ENSP00000373608.4"/>
    <property type="gene ID" value="ENSG00000155719.18"/>
</dbReference>
<dbReference type="Ensembl" id="ENST00000388957.3">
    <molecule id="Q7RTW8-2"/>
    <property type="protein sequence ID" value="ENSP00000373609.3"/>
    <property type="gene ID" value="ENSG00000155719.18"/>
</dbReference>
<dbReference type="Ensembl" id="ENST00000388958.8">
    <molecule id="Q7RTW8-5"/>
    <property type="protein sequence ID" value="ENSP00000373610.3"/>
    <property type="gene ID" value="ENSG00000155719.18"/>
</dbReference>
<dbReference type="Ensembl" id="ENST00000646100.2">
    <molecule id="Q7RTW8-5"/>
    <property type="protein sequence ID" value="ENSP00000496564.2"/>
    <property type="gene ID" value="ENSG00000155719.18"/>
</dbReference>
<dbReference type="GeneID" id="146183"/>
<dbReference type="KEGG" id="hsa:146183"/>
<dbReference type="MANE-Select" id="ENST00000646100.2">
    <molecule id="Q7RTW8-5"/>
    <property type="protein sequence ID" value="ENSP00000496564.2"/>
    <property type="RefSeq nucleotide sequence ID" value="NM_144672.4"/>
    <property type="RefSeq protein sequence ID" value="NP_653273.3"/>
</dbReference>
<dbReference type="UCSC" id="uc002djh.3">
    <molecule id="Q7RTW8-1"/>
    <property type="organism name" value="human"/>
</dbReference>
<dbReference type="AGR" id="HGNC:16378"/>
<dbReference type="CTD" id="146183"/>
<dbReference type="DisGeNET" id="146183"/>
<dbReference type="GeneCards" id="OTOA"/>
<dbReference type="GeneReviews" id="OTOA"/>
<dbReference type="HGNC" id="HGNC:16378">
    <property type="gene designation" value="OTOA"/>
</dbReference>
<dbReference type="HPA" id="ENSG00000155719">
    <property type="expression patterns" value="Group enriched (lymphoid tissue, testis)"/>
</dbReference>
<dbReference type="MalaCards" id="OTOA"/>
<dbReference type="MIM" id="607038">
    <property type="type" value="gene"/>
</dbReference>
<dbReference type="MIM" id="607039">
    <property type="type" value="phenotype"/>
</dbReference>
<dbReference type="neXtProt" id="NX_Q7RTW8"/>
<dbReference type="OpenTargets" id="ENSG00000155719"/>
<dbReference type="Orphanet" id="90636">
    <property type="disease" value="Rare autosomal recessive non-syndromic sensorineural deafness type DFNB"/>
</dbReference>
<dbReference type="PharmGKB" id="PA38403"/>
<dbReference type="VEuPathDB" id="HostDB:ENSG00000155719"/>
<dbReference type="eggNOG" id="ENOG502QU5H">
    <property type="taxonomic scope" value="Eukaryota"/>
</dbReference>
<dbReference type="GeneTree" id="ENSGT00950000182957"/>
<dbReference type="HOGENOM" id="CLU_291462_0_0_1"/>
<dbReference type="InParanoid" id="Q7RTW8"/>
<dbReference type="OMA" id="QYFENNF"/>
<dbReference type="OrthoDB" id="8195838at2759"/>
<dbReference type="PAN-GO" id="Q7RTW8">
    <property type="GO annotations" value="2 GO annotations based on evolutionary models"/>
</dbReference>
<dbReference type="PhylomeDB" id="Q7RTW8"/>
<dbReference type="TreeFam" id="TF336607"/>
<dbReference type="PathwayCommons" id="Q7RTW8"/>
<dbReference type="Reactome" id="R-HSA-163125">
    <property type="pathway name" value="Post-translational modification: synthesis of GPI-anchored proteins"/>
</dbReference>
<dbReference type="SignaLink" id="Q7RTW8"/>
<dbReference type="BioGRID-ORCS" id="146183">
    <property type="hits" value="15 hits in 1141 CRISPR screens"/>
</dbReference>
<dbReference type="ChiTaRS" id="OTOA">
    <property type="organism name" value="human"/>
</dbReference>
<dbReference type="GenomeRNAi" id="146183"/>
<dbReference type="Pharos" id="Q7RTW8">
    <property type="development level" value="Tbio"/>
</dbReference>
<dbReference type="PRO" id="PR:Q7RTW8"/>
<dbReference type="Proteomes" id="UP000005640">
    <property type="component" value="Chromosome 16"/>
</dbReference>
<dbReference type="RNAct" id="Q7RTW8">
    <property type="molecule type" value="protein"/>
</dbReference>
<dbReference type="Bgee" id="ENSG00000155719">
    <property type="expression patterns" value="Expressed in primordial germ cell in gonad and 70 other cell types or tissues"/>
</dbReference>
<dbReference type="ExpressionAtlas" id="Q7RTW8">
    <property type="expression patterns" value="baseline and differential"/>
</dbReference>
<dbReference type="GO" id="GO:0016324">
    <property type="term" value="C:apical plasma membrane"/>
    <property type="evidence" value="ECO:0007669"/>
    <property type="project" value="UniProtKB-SubCell"/>
</dbReference>
<dbReference type="GO" id="GO:0009986">
    <property type="term" value="C:cell surface"/>
    <property type="evidence" value="ECO:0000318"/>
    <property type="project" value="GO_Central"/>
</dbReference>
<dbReference type="GO" id="GO:0005576">
    <property type="term" value="C:extracellular region"/>
    <property type="evidence" value="ECO:0000304"/>
    <property type="project" value="Reactome"/>
</dbReference>
<dbReference type="GO" id="GO:0005886">
    <property type="term" value="C:plasma membrane"/>
    <property type="evidence" value="ECO:0000304"/>
    <property type="project" value="Reactome"/>
</dbReference>
<dbReference type="GO" id="GO:0098552">
    <property type="term" value="C:side of membrane"/>
    <property type="evidence" value="ECO:0007669"/>
    <property type="project" value="UniProtKB-KW"/>
</dbReference>
<dbReference type="GO" id="GO:0007160">
    <property type="term" value="P:cell-matrix adhesion"/>
    <property type="evidence" value="ECO:0000318"/>
    <property type="project" value="GO_Central"/>
</dbReference>
<dbReference type="GO" id="GO:0035264">
    <property type="term" value="P:multicellular organism growth"/>
    <property type="evidence" value="ECO:0007669"/>
    <property type="project" value="Ensembl"/>
</dbReference>
<dbReference type="GO" id="GO:0007605">
    <property type="term" value="P:sensory perception of sound"/>
    <property type="evidence" value="ECO:0007669"/>
    <property type="project" value="UniProtKB-KW"/>
</dbReference>
<dbReference type="GO" id="GO:0019226">
    <property type="term" value="P:transmission of nerve impulse"/>
    <property type="evidence" value="ECO:0007669"/>
    <property type="project" value="Ensembl"/>
</dbReference>
<dbReference type="InterPro" id="IPR026664">
    <property type="entry name" value="Stereocilin-rel"/>
</dbReference>
<dbReference type="PANTHER" id="PTHR23412:SF18">
    <property type="entry name" value="OTOANCORIN"/>
    <property type="match status" value="1"/>
</dbReference>
<dbReference type="PANTHER" id="PTHR23412">
    <property type="entry name" value="STEREOCILIN RELATED"/>
    <property type="match status" value="1"/>
</dbReference>